<protein>
    <recommendedName>
        <fullName evidence="1">Ribulose bisphosphate carboxylase small subunit, chloroplastic 5</fullName>
        <shortName evidence="1">RuBisCO small subunit 5</shortName>
    </recommendedName>
</protein>
<comment type="function">
    <text evidence="1">RuBisCO catalyzes two reactions: the carboxylation of D-ribulose 1,5-bisphosphate, the primary event in carbon dioxide fixation, as well as the oxidative fragmentation of the pentose substrate. Both reactions occur simultaneously and in competition at the same active site. Although the small subunit is not catalytic it is essential for maximal activity.</text>
</comment>
<comment type="subunit">
    <text evidence="1">Heterohexadecamer of 8 large and 8 small subunits.</text>
</comment>
<comment type="subcellular location">
    <subcellularLocation>
        <location evidence="1">Plastid</location>
        <location evidence="1">Chloroplast</location>
    </subcellularLocation>
</comment>
<comment type="miscellaneous">
    <text evidence="1">The basic functional RuBisCO is composed of a large chain homodimer in a 'head-to-tail' conformation. In form I RuBisCO this homodimer is arranged in a barrel-like tetramer with the small subunits forming a tetrameric 'cap' on each end of the 'barrel'.</text>
</comment>
<comment type="similarity">
    <text evidence="1">Belongs to the RuBisCO small chain family.</text>
</comment>
<proteinExistence type="evidence at transcript level"/>
<evidence type="ECO:0000255" key="1">
    <source>
        <dbReference type="HAMAP-Rule" id="MF_00860"/>
    </source>
</evidence>
<name>RBS5_ACEAT</name>
<organism>
    <name type="scientific">Acetabularia acetabulum</name>
    <name type="common">Mermaid's wine glass</name>
    <name type="synonym">Acetabularia mediterranea</name>
    <dbReference type="NCBI Taxonomy" id="35845"/>
    <lineage>
        <taxon>Eukaryota</taxon>
        <taxon>Viridiplantae</taxon>
        <taxon>Chlorophyta</taxon>
        <taxon>Ulvophyceae</taxon>
        <taxon>TCBD clade</taxon>
        <taxon>Dasycladales</taxon>
        <taxon>Polyphysaceae</taxon>
        <taxon>Acetabularia</taxon>
    </lineage>
</organism>
<sequence length="183" mass="20556">MAAAMMNKSVLLNKQCGKPAAVPKVVMSKGGFARTSAVNKNRDMMVWQPFNNKMFETFSFLPPLTDEQISKQVDYILANSWTPCLEFAASDQAYAGNENCIRMGPVASTYQDNRYWTMWKLPMFGCTDGSQVLSEIQACTNAFPDAYIRLVCFDANRQVQISGFLVHRPPSATDYRLPADRQV</sequence>
<feature type="transit peptide" description="Chloroplast" evidence="1">
    <location>
        <begin position="1"/>
        <end position="42"/>
    </location>
</feature>
<feature type="chain" id="PRO_0000031458" description="Ribulose bisphosphate carboxylase small subunit, chloroplastic 5" evidence="1">
    <location>
        <begin position="43"/>
        <end position="183"/>
    </location>
</feature>
<dbReference type="EMBL" id="X51815">
    <property type="protein sequence ID" value="CAA36112.1"/>
    <property type="molecule type" value="mRNA"/>
</dbReference>
<dbReference type="PIR" id="S05351">
    <property type="entry name" value="RKJK5M"/>
</dbReference>
<dbReference type="SMR" id="P16138"/>
<dbReference type="GO" id="GO:0009507">
    <property type="term" value="C:chloroplast"/>
    <property type="evidence" value="ECO:0007669"/>
    <property type="project" value="UniProtKB-SubCell"/>
</dbReference>
<dbReference type="GO" id="GO:0016984">
    <property type="term" value="F:ribulose-bisphosphate carboxylase activity"/>
    <property type="evidence" value="ECO:0007669"/>
    <property type="project" value="UniProtKB-UniRule"/>
</dbReference>
<dbReference type="GO" id="GO:0009853">
    <property type="term" value="P:photorespiration"/>
    <property type="evidence" value="ECO:0007669"/>
    <property type="project" value="UniProtKB-KW"/>
</dbReference>
<dbReference type="GO" id="GO:0019253">
    <property type="term" value="P:reductive pentose-phosphate cycle"/>
    <property type="evidence" value="ECO:0007669"/>
    <property type="project" value="UniProtKB-UniRule"/>
</dbReference>
<dbReference type="CDD" id="cd03527">
    <property type="entry name" value="RuBisCO_small"/>
    <property type="match status" value="1"/>
</dbReference>
<dbReference type="FunFam" id="3.30.190.10:FF:000001">
    <property type="entry name" value="Ribulose bisphosphate carboxylase small chain, chloroplastic"/>
    <property type="match status" value="1"/>
</dbReference>
<dbReference type="Gene3D" id="3.30.190.10">
    <property type="entry name" value="Ribulose bisphosphate carboxylase, small subunit"/>
    <property type="match status" value="1"/>
</dbReference>
<dbReference type="HAMAP" id="MF_00859">
    <property type="entry name" value="RuBisCO_S_bact"/>
    <property type="match status" value="1"/>
</dbReference>
<dbReference type="InterPro" id="IPR024681">
    <property type="entry name" value="RuBisCO_ssu"/>
</dbReference>
<dbReference type="InterPro" id="IPR000894">
    <property type="entry name" value="RuBisCO_ssu_dom"/>
</dbReference>
<dbReference type="InterPro" id="IPR036385">
    <property type="entry name" value="RuBisCO_ssu_sf"/>
</dbReference>
<dbReference type="PANTHER" id="PTHR31262">
    <property type="entry name" value="RIBULOSE BISPHOSPHATE CARBOXYLASE SMALL CHAIN 1, CHLOROPLASTIC"/>
    <property type="match status" value="1"/>
</dbReference>
<dbReference type="PANTHER" id="PTHR31262:SF0">
    <property type="entry name" value="RIBULOSE BISPHOSPHATE CARBOXYLASE SMALL SUBUNIT, CHLOROPLASTIC 1"/>
    <property type="match status" value="1"/>
</dbReference>
<dbReference type="Pfam" id="PF00101">
    <property type="entry name" value="RuBisCO_small"/>
    <property type="match status" value="1"/>
</dbReference>
<dbReference type="PRINTS" id="PR00152">
    <property type="entry name" value="RUBISCOSMALL"/>
</dbReference>
<dbReference type="SMART" id="SM00961">
    <property type="entry name" value="RuBisCO_small"/>
    <property type="match status" value="1"/>
</dbReference>
<dbReference type="SUPFAM" id="SSF55239">
    <property type="entry name" value="RuBisCO, small subunit"/>
    <property type="match status" value="1"/>
</dbReference>
<gene>
    <name evidence="1" type="primary">RBCS5</name>
    <name type="synonym">RBCS-5</name>
</gene>
<accession>P16138</accession>
<keyword id="KW-0113">Calvin cycle</keyword>
<keyword id="KW-0120">Carbon dioxide fixation</keyword>
<keyword id="KW-0150">Chloroplast</keyword>
<keyword id="KW-0601">Photorespiration</keyword>
<keyword id="KW-0602">Photosynthesis</keyword>
<keyword id="KW-0934">Plastid</keyword>
<keyword id="KW-0809">Transit peptide</keyword>
<reference key="1">
    <citation type="journal article" date="1989" name="Mol. Gen. Genet.">
        <title>Strong homology between the small subunit of ribulose-1,5-bisphosphate carboxylase/oxygenase of two species of Acetabularia and the occurrence of unusual codon usage.</title>
        <authorList>
            <person name="Schneider S.U."/>
            <person name="Leible M.B."/>
            <person name="Yang X.P."/>
        </authorList>
    </citation>
    <scope>NUCLEOTIDE SEQUENCE [MRNA]</scope>
    <source>
        <strain>17</strain>
    </source>
</reference>